<proteinExistence type="inferred from homology"/>
<name>RIMP_STRPI</name>
<organism>
    <name type="scientific">Streptococcus pneumoniae (strain Hungary19A-6)</name>
    <dbReference type="NCBI Taxonomy" id="487214"/>
    <lineage>
        <taxon>Bacteria</taxon>
        <taxon>Bacillati</taxon>
        <taxon>Bacillota</taxon>
        <taxon>Bacilli</taxon>
        <taxon>Lactobacillales</taxon>
        <taxon>Streptococcaceae</taxon>
        <taxon>Streptococcus</taxon>
    </lineage>
</organism>
<sequence>MDAIATIVELVREVVEPVIEAPFELVDIEYGKIGSDMILSIFVDKPEGITLNDTADLTEIISPVLDTIKPDPFPEQYFLEITSPGLERPLKTKDAVAGAVGKYIHVGLYQAIDKQKVFEGTLLAFEEDELTMEYMDKTRKKTVRIPYSLVSKARLAVKL</sequence>
<feature type="chain" id="PRO_1000136799" description="Ribosome maturation factor RimP">
    <location>
        <begin position="1"/>
        <end position="159"/>
    </location>
</feature>
<protein>
    <recommendedName>
        <fullName evidence="1">Ribosome maturation factor RimP</fullName>
    </recommendedName>
</protein>
<evidence type="ECO:0000255" key="1">
    <source>
        <dbReference type="HAMAP-Rule" id="MF_01077"/>
    </source>
</evidence>
<dbReference type="EMBL" id="CP000936">
    <property type="protein sequence ID" value="ACA36667.1"/>
    <property type="molecule type" value="Genomic_DNA"/>
</dbReference>
<dbReference type="RefSeq" id="WP_001810863.1">
    <property type="nucleotide sequence ID" value="NC_010380.1"/>
</dbReference>
<dbReference type="SMR" id="B1IA76"/>
<dbReference type="KEGG" id="spv:SPH_0649"/>
<dbReference type="HOGENOM" id="CLU_070525_2_0_9"/>
<dbReference type="Proteomes" id="UP000002163">
    <property type="component" value="Chromosome"/>
</dbReference>
<dbReference type="GO" id="GO:0005829">
    <property type="term" value="C:cytosol"/>
    <property type="evidence" value="ECO:0007669"/>
    <property type="project" value="TreeGrafter"/>
</dbReference>
<dbReference type="GO" id="GO:0000028">
    <property type="term" value="P:ribosomal small subunit assembly"/>
    <property type="evidence" value="ECO:0007669"/>
    <property type="project" value="TreeGrafter"/>
</dbReference>
<dbReference type="GO" id="GO:0006412">
    <property type="term" value="P:translation"/>
    <property type="evidence" value="ECO:0007669"/>
    <property type="project" value="TreeGrafter"/>
</dbReference>
<dbReference type="CDD" id="cd01734">
    <property type="entry name" value="YlxS_C"/>
    <property type="match status" value="1"/>
</dbReference>
<dbReference type="Gene3D" id="2.30.30.180">
    <property type="entry name" value="Ribosome maturation factor RimP, C-terminal domain"/>
    <property type="match status" value="1"/>
</dbReference>
<dbReference type="Gene3D" id="3.30.300.70">
    <property type="entry name" value="RimP-like superfamily, N-terminal"/>
    <property type="match status" value="1"/>
</dbReference>
<dbReference type="HAMAP" id="MF_01077">
    <property type="entry name" value="RimP"/>
    <property type="match status" value="1"/>
</dbReference>
<dbReference type="InterPro" id="IPR003728">
    <property type="entry name" value="Ribosome_maturation_RimP"/>
</dbReference>
<dbReference type="InterPro" id="IPR028998">
    <property type="entry name" value="RimP_C"/>
</dbReference>
<dbReference type="InterPro" id="IPR036847">
    <property type="entry name" value="RimP_C_sf"/>
</dbReference>
<dbReference type="InterPro" id="IPR028989">
    <property type="entry name" value="RimP_N"/>
</dbReference>
<dbReference type="InterPro" id="IPR035956">
    <property type="entry name" value="RimP_N_sf"/>
</dbReference>
<dbReference type="NCBIfam" id="NF000928">
    <property type="entry name" value="PRK00092.1-2"/>
    <property type="match status" value="1"/>
</dbReference>
<dbReference type="PANTHER" id="PTHR33867">
    <property type="entry name" value="RIBOSOME MATURATION FACTOR RIMP"/>
    <property type="match status" value="1"/>
</dbReference>
<dbReference type="PANTHER" id="PTHR33867:SF1">
    <property type="entry name" value="RIBOSOME MATURATION FACTOR RIMP"/>
    <property type="match status" value="1"/>
</dbReference>
<dbReference type="Pfam" id="PF17384">
    <property type="entry name" value="DUF150_C"/>
    <property type="match status" value="1"/>
</dbReference>
<dbReference type="Pfam" id="PF02576">
    <property type="entry name" value="RimP_N"/>
    <property type="match status" value="1"/>
</dbReference>
<dbReference type="SUPFAM" id="SSF74942">
    <property type="entry name" value="YhbC-like, C-terminal domain"/>
    <property type="match status" value="1"/>
</dbReference>
<dbReference type="SUPFAM" id="SSF75420">
    <property type="entry name" value="YhbC-like, N-terminal domain"/>
    <property type="match status" value="1"/>
</dbReference>
<comment type="function">
    <text evidence="1">Required for maturation of 30S ribosomal subunits.</text>
</comment>
<comment type="subcellular location">
    <subcellularLocation>
        <location evidence="1">Cytoplasm</location>
    </subcellularLocation>
</comment>
<comment type="similarity">
    <text evidence="1">Belongs to the RimP family.</text>
</comment>
<keyword id="KW-0963">Cytoplasm</keyword>
<keyword id="KW-0690">Ribosome biogenesis</keyword>
<accession>B1IA76</accession>
<gene>
    <name evidence="1" type="primary">rimP</name>
    <name type="ordered locus">SPH_0649</name>
</gene>
<reference key="1">
    <citation type="journal article" date="2010" name="Genome Biol.">
        <title>Structure and dynamics of the pan-genome of Streptococcus pneumoniae and closely related species.</title>
        <authorList>
            <person name="Donati C."/>
            <person name="Hiller N.L."/>
            <person name="Tettelin H."/>
            <person name="Muzzi A."/>
            <person name="Croucher N.J."/>
            <person name="Angiuoli S.V."/>
            <person name="Oggioni M."/>
            <person name="Dunning Hotopp J.C."/>
            <person name="Hu F.Z."/>
            <person name="Riley D.R."/>
            <person name="Covacci A."/>
            <person name="Mitchell T.J."/>
            <person name="Bentley S.D."/>
            <person name="Kilian M."/>
            <person name="Ehrlich G.D."/>
            <person name="Rappuoli R."/>
            <person name="Moxon E.R."/>
            <person name="Masignani V."/>
        </authorList>
    </citation>
    <scope>NUCLEOTIDE SEQUENCE [LARGE SCALE GENOMIC DNA]</scope>
    <source>
        <strain>Hungary19A-6</strain>
    </source>
</reference>